<dbReference type="EC" id="4.2.1.108" evidence="1"/>
<dbReference type="EMBL" id="BA000031">
    <property type="protein sequence ID" value="BAC59983.1"/>
    <property type="molecule type" value="Genomic_DNA"/>
</dbReference>
<dbReference type="RefSeq" id="NP_798099.1">
    <property type="nucleotide sequence ID" value="NC_004603.1"/>
</dbReference>
<dbReference type="RefSeq" id="WP_005464385.1">
    <property type="nucleotide sequence ID" value="NC_004603.1"/>
</dbReference>
<dbReference type="SMR" id="Q87NZ8"/>
<dbReference type="GeneID" id="1189227"/>
<dbReference type="KEGG" id="vpa:VP1720"/>
<dbReference type="PATRIC" id="fig|223926.6.peg.1640"/>
<dbReference type="eggNOG" id="COG0662">
    <property type="taxonomic scope" value="Bacteria"/>
</dbReference>
<dbReference type="HOGENOM" id="CLU_154525_0_0_6"/>
<dbReference type="UniPathway" id="UPA00067">
    <property type="reaction ID" value="UER00123"/>
</dbReference>
<dbReference type="Proteomes" id="UP000002493">
    <property type="component" value="Chromosome 1"/>
</dbReference>
<dbReference type="GO" id="GO:0033990">
    <property type="term" value="F:ectoine synthase activity"/>
    <property type="evidence" value="ECO:0007669"/>
    <property type="project" value="UniProtKB-EC"/>
</dbReference>
<dbReference type="GO" id="GO:0019491">
    <property type="term" value="P:ectoine biosynthetic process"/>
    <property type="evidence" value="ECO:0007669"/>
    <property type="project" value="UniProtKB-UniRule"/>
</dbReference>
<dbReference type="CDD" id="cd06978">
    <property type="entry name" value="cupin_EctC"/>
    <property type="match status" value="1"/>
</dbReference>
<dbReference type="Gene3D" id="2.60.120.10">
    <property type="entry name" value="Jelly Rolls"/>
    <property type="match status" value="1"/>
</dbReference>
<dbReference type="HAMAP" id="MF_01255">
    <property type="entry name" value="Ectoine_synth"/>
    <property type="match status" value="1"/>
</dbReference>
<dbReference type="InterPro" id="IPR010462">
    <property type="entry name" value="Ectoine_synth"/>
</dbReference>
<dbReference type="InterPro" id="IPR014710">
    <property type="entry name" value="RmlC-like_jellyroll"/>
</dbReference>
<dbReference type="InterPro" id="IPR011051">
    <property type="entry name" value="RmlC_Cupin_sf"/>
</dbReference>
<dbReference type="NCBIfam" id="NF009806">
    <property type="entry name" value="PRK13290.1"/>
    <property type="match status" value="1"/>
</dbReference>
<dbReference type="PANTHER" id="PTHR39289">
    <property type="match status" value="1"/>
</dbReference>
<dbReference type="PANTHER" id="PTHR39289:SF1">
    <property type="entry name" value="L-ECTOINE SYNTHASE"/>
    <property type="match status" value="1"/>
</dbReference>
<dbReference type="Pfam" id="PF06339">
    <property type="entry name" value="Ectoine_synth"/>
    <property type="match status" value="1"/>
</dbReference>
<dbReference type="SUPFAM" id="SSF51182">
    <property type="entry name" value="RmlC-like cupins"/>
    <property type="match status" value="1"/>
</dbReference>
<proteinExistence type="inferred from homology"/>
<organism>
    <name type="scientific">Vibrio parahaemolyticus serotype O3:K6 (strain RIMD 2210633)</name>
    <dbReference type="NCBI Taxonomy" id="223926"/>
    <lineage>
        <taxon>Bacteria</taxon>
        <taxon>Pseudomonadati</taxon>
        <taxon>Pseudomonadota</taxon>
        <taxon>Gammaproteobacteria</taxon>
        <taxon>Vibrionales</taxon>
        <taxon>Vibrionaceae</taxon>
        <taxon>Vibrio</taxon>
    </lineage>
</organism>
<reference key="1">
    <citation type="journal article" date="2003" name="Lancet">
        <title>Genome sequence of Vibrio parahaemolyticus: a pathogenic mechanism distinct from that of V. cholerae.</title>
        <authorList>
            <person name="Makino K."/>
            <person name="Oshima K."/>
            <person name="Kurokawa K."/>
            <person name="Yokoyama K."/>
            <person name="Uda T."/>
            <person name="Tagomori K."/>
            <person name="Iijima Y."/>
            <person name="Najima M."/>
            <person name="Nakano M."/>
            <person name="Yamashita A."/>
            <person name="Kubota Y."/>
            <person name="Kimura S."/>
            <person name="Yasunaga T."/>
            <person name="Honda T."/>
            <person name="Shinagawa H."/>
            <person name="Hattori M."/>
            <person name="Iida T."/>
        </authorList>
    </citation>
    <scope>NUCLEOTIDE SEQUENCE [LARGE SCALE GENOMIC DNA]</scope>
    <source>
        <strain>RIMD 2210633</strain>
    </source>
</reference>
<protein>
    <recommendedName>
        <fullName evidence="1">L-ectoine synthase</fullName>
        <ecNumber evidence="1">4.2.1.108</ecNumber>
    </recommendedName>
    <alternativeName>
        <fullName evidence="1">N-acetyldiaminobutyrate dehydratase</fullName>
    </alternativeName>
</protein>
<accession>Q87NZ8</accession>
<comment type="function">
    <text evidence="1">Catalyzes the circularization of gamma-N-acetyl-alpha,gamma-diaminobutyric acid (ADABA) to ectoine (1,4,5,6-tetrahydro-2-methyl-4-pyrimidine carboxylic acid), which is an excellent osmoprotectant.</text>
</comment>
<comment type="catalytic activity">
    <reaction evidence="1">
        <text>(2S)-4-acetamido-2-aminobutanoate = L-ectoine + H2O</text>
        <dbReference type="Rhea" id="RHEA:17281"/>
        <dbReference type="ChEBI" id="CHEBI:15377"/>
        <dbReference type="ChEBI" id="CHEBI:58515"/>
        <dbReference type="ChEBI" id="CHEBI:58929"/>
        <dbReference type="EC" id="4.2.1.108"/>
    </reaction>
</comment>
<comment type="pathway">
    <text evidence="1">Amine and polyamine biosynthesis; ectoine biosynthesis; L-ectoine from L-aspartate 4-semialdehyde: step 3/3.</text>
</comment>
<comment type="similarity">
    <text evidence="1">Belongs to the ectoine synthase family.</text>
</comment>
<feature type="chain" id="PRO_0000220160" description="L-ectoine synthase">
    <location>
        <begin position="1"/>
        <end position="128"/>
    </location>
</feature>
<gene>
    <name evidence="1" type="primary">ectC</name>
    <name type="ordered locus">VP1720</name>
</gene>
<sequence>MIVRTLDECRNSERRVVADNWESVRMLLKDDNMGFSFHITTIYEGTETHIHYQNHLESVFCMSGEGEIEVVGGETYPIKPGTLYILDKHDEHYLRAYKNKEMVMACVFNPPITGAEVHDENGVYPLVD</sequence>
<name>ECTC_VIBPA</name>
<keyword id="KW-0456">Lyase</keyword>
<evidence type="ECO:0000255" key="1">
    <source>
        <dbReference type="HAMAP-Rule" id="MF_01255"/>
    </source>
</evidence>